<protein>
    <recommendedName>
        <fullName evidence="1">Ribosomal RNA small subunit methyltransferase A</fullName>
        <ecNumber evidence="1">2.1.1.182</ecNumber>
    </recommendedName>
    <alternativeName>
        <fullName evidence="1">16S rRNA (adenine(1518)-N(6)/adenine(1519)-N(6))-dimethyltransferase</fullName>
    </alternativeName>
    <alternativeName>
        <fullName evidence="1">16S rRNA dimethyladenosine transferase</fullName>
    </alternativeName>
    <alternativeName>
        <fullName evidence="1">16S rRNA dimethylase</fullName>
    </alternativeName>
    <alternativeName>
        <fullName evidence="1">S-adenosylmethionine-6-N', N'-adenosyl(rRNA) dimethyltransferase</fullName>
    </alternativeName>
</protein>
<name>RSMA_BACC0</name>
<comment type="function">
    <text evidence="1">Specifically dimethylates two adjacent adenosines (A1518 and A1519) in the loop of a conserved hairpin near the 3'-end of 16S rRNA in the 30S particle. May play a critical role in biogenesis of 30S subunits.</text>
</comment>
<comment type="catalytic activity">
    <reaction evidence="1">
        <text>adenosine(1518)/adenosine(1519) in 16S rRNA + 4 S-adenosyl-L-methionine = N(6)-dimethyladenosine(1518)/N(6)-dimethyladenosine(1519) in 16S rRNA + 4 S-adenosyl-L-homocysteine + 4 H(+)</text>
        <dbReference type="Rhea" id="RHEA:19609"/>
        <dbReference type="Rhea" id="RHEA-COMP:10232"/>
        <dbReference type="Rhea" id="RHEA-COMP:10233"/>
        <dbReference type="ChEBI" id="CHEBI:15378"/>
        <dbReference type="ChEBI" id="CHEBI:57856"/>
        <dbReference type="ChEBI" id="CHEBI:59789"/>
        <dbReference type="ChEBI" id="CHEBI:74411"/>
        <dbReference type="ChEBI" id="CHEBI:74493"/>
        <dbReference type="EC" id="2.1.1.182"/>
    </reaction>
</comment>
<comment type="subcellular location">
    <subcellularLocation>
        <location evidence="1">Cytoplasm</location>
    </subcellularLocation>
</comment>
<comment type="similarity">
    <text evidence="1">Belongs to the class I-like SAM-binding methyltransferase superfamily. rRNA adenine N(6)-methyltransferase family. RsmA subfamily.</text>
</comment>
<feature type="chain" id="PRO_1000130241" description="Ribosomal RNA small subunit methyltransferase A">
    <location>
        <begin position="1"/>
        <end position="292"/>
    </location>
</feature>
<feature type="binding site" evidence="1">
    <location>
        <position position="28"/>
    </location>
    <ligand>
        <name>S-adenosyl-L-methionine</name>
        <dbReference type="ChEBI" id="CHEBI:59789"/>
    </ligand>
</feature>
<feature type="binding site" evidence="1">
    <location>
        <position position="30"/>
    </location>
    <ligand>
        <name>S-adenosyl-L-methionine</name>
        <dbReference type="ChEBI" id="CHEBI:59789"/>
    </ligand>
</feature>
<feature type="binding site" evidence="1">
    <location>
        <position position="55"/>
    </location>
    <ligand>
        <name>S-adenosyl-L-methionine</name>
        <dbReference type="ChEBI" id="CHEBI:59789"/>
    </ligand>
</feature>
<feature type="binding site" evidence="1">
    <location>
        <position position="76"/>
    </location>
    <ligand>
        <name>S-adenosyl-L-methionine</name>
        <dbReference type="ChEBI" id="CHEBI:59789"/>
    </ligand>
</feature>
<feature type="binding site" evidence="1">
    <location>
        <position position="101"/>
    </location>
    <ligand>
        <name>S-adenosyl-L-methionine</name>
        <dbReference type="ChEBI" id="CHEBI:59789"/>
    </ligand>
</feature>
<feature type="binding site" evidence="1">
    <location>
        <position position="126"/>
    </location>
    <ligand>
        <name>S-adenosyl-L-methionine</name>
        <dbReference type="ChEBI" id="CHEBI:59789"/>
    </ligand>
</feature>
<evidence type="ECO:0000255" key="1">
    <source>
        <dbReference type="HAMAP-Rule" id="MF_00607"/>
    </source>
</evidence>
<gene>
    <name evidence="1" type="primary">rsmA</name>
    <name evidence="1" type="synonym">ksgA</name>
    <name type="ordered locus">BCAH820_0046</name>
</gene>
<reference key="1">
    <citation type="submission" date="2008-10" db="EMBL/GenBank/DDBJ databases">
        <title>Genome sequence of Bacillus cereus AH820.</title>
        <authorList>
            <person name="Dodson R.J."/>
            <person name="Durkin A.S."/>
            <person name="Rosovitz M.J."/>
            <person name="Rasko D.A."/>
            <person name="Hoffmaster A."/>
            <person name="Ravel J."/>
            <person name="Sutton G."/>
        </authorList>
    </citation>
    <scope>NUCLEOTIDE SEQUENCE [LARGE SCALE GENOMIC DNA]</scope>
    <source>
        <strain>AH820</strain>
    </source>
</reference>
<keyword id="KW-0963">Cytoplasm</keyword>
<keyword id="KW-0489">Methyltransferase</keyword>
<keyword id="KW-0694">RNA-binding</keyword>
<keyword id="KW-0698">rRNA processing</keyword>
<keyword id="KW-0949">S-adenosyl-L-methionine</keyword>
<keyword id="KW-0808">Transferase</keyword>
<dbReference type="EC" id="2.1.1.182" evidence="1"/>
<dbReference type="EMBL" id="CP001283">
    <property type="protein sequence ID" value="ACK90660.1"/>
    <property type="molecule type" value="Genomic_DNA"/>
</dbReference>
<dbReference type="RefSeq" id="WP_000651552.1">
    <property type="nucleotide sequence ID" value="NC_011773.1"/>
</dbReference>
<dbReference type="SMR" id="B7JK47"/>
<dbReference type="GeneID" id="75083305"/>
<dbReference type="KEGG" id="bcu:BCAH820_0046"/>
<dbReference type="HOGENOM" id="CLU_041220_0_0_9"/>
<dbReference type="Proteomes" id="UP000001363">
    <property type="component" value="Chromosome"/>
</dbReference>
<dbReference type="GO" id="GO:0005829">
    <property type="term" value="C:cytosol"/>
    <property type="evidence" value="ECO:0007669"/>
    <property type="project" value="TreeGrafter"/>
</dbReference>
<dbReference type="GO" id="GO:0052908">
    <property type="term" value="F:16S rRNA (adenine(1518)-N(6)/adenine(1519)-N(6))-dimethyltransferase activity"/>
    <property type="evidence" value="ECO:0007669"/>
    <property type="project" value="UniProtKB-EC"/>
</dbReference>
<dbReference type="GO" id="GO:0003723">
    <property type="term" value="F:RNA binding"/>
    <property type="evidence" value="ECO:0007669"/>
    <property type="project" value="UniProtKB-KW"/>
</dbReference>
<dbReference type="CDD" id="cd02440">
    <property type="entry name" value="AdoMet_MTases"/>
    <property type="match status" value="1"/>
</dbReference>
<dbReference type="FunFam" id="1.10.8.100:FF:000002">
    <property type="entry name" value="Ribosomal RNA small subunit methyltransferase A"/>
    <property type="match status" value="1"/>
</dbReference>
<dbReference type="FunFam" id="3.40.50.150:FF:000023">
    <property type="entry name" value="Ribosomal RNA small subunit methyltransferase A"/>
    <property type="match status" value="1"/>
</dbReference>
<dbReference type="Gene3D" id="1.10.8.100">
    <property type="entry name" value="Ribosomal RNA adenine dimethylase-like, domain 2"/>
    <property type="match status" value="1"/>
</dbReference>
<dbReference type="Gene3D" id="3.40.50.150">
    <property type="entry name" value="Vaccinia Virus protein VP39"/>
    <property type="match status" value="1"/>
</dbReference>
<dbReference type="HAMAP" id="MF_00607">
    <property type="entry name" value="16SrRNA_methyltr_A"/>
    <property type="match status" value="1"/>
</dbReference>
<dbReference type="InterPro" id="IPR001737">
    <property type="entry name" value="KsgA/Erm"/>
</dbReference>
<dbReference type="InterPro" id="IPR023165">
    <property type="entry name" value="rRNA_Ade_diMease-like_C"/>
</dbReference>
<dbReference type="InterPro" id="IPR020596">
    <property type="entry name" value="rRNA_Ade_Mease_Trfase_CS"/>
</dbReference>
<dbReference type="InterPro" id="IPR020598">
    <property type="entry name" value="rRNA_Ade_methylase_Trfase_N"/>
</dbReference>
<dbReference type="InterPro" id="IPR011530">
    <property type="entry name" value="rRNA_adenine_dimethylase"/>
</dbReference>
<dbReference type="InterPro" id="IPR029063">
    <property type="entry name" value="SAM-dependent_MTases_sf"/>
</dbReference>
<dbReference type="NCBIfam" id="TIGR00755">
    <property type="entry name" value="ksgA"/>
    <property type="match status" value="1"/>
</dbReference>
<dbReference type="PANTHER" id="PTHR11727">
    <property type="entry name" value="DIMETHYLADENOSINE TRANSFERASE"/>
    <property type="match status" value="1"/>
</dbReference>
<dbReference type="PANTHER" id="PTHR11727:SF7">
    <property type="entry name" value="DIMETHYLADENOSINE TRANSFERASE-RELATED"/>
    <property type="match status" value="1"/>
</dbReference>
<dbReference type="Pfam" id="PF00398">
    <property type="entry name" value="RrnaAD"/>
    <property type="match status" value="1"/>
</dbReference>
<dbReference type="SMART" id="SM00650">
    <property type="entry name" value="rADc"/>
    <property type="match status" value="1"/>
</dbReference>
<dbReference type="SUPFAM" id="SSF53335">
    <property type="entry name" value="S-adenosyl-L-methionine-dependent methyltransferases"/>
    <property type="match status" value="1"/>
</dbReference>
<dbReference type="PROSITE" id="PS01131">
    <property type="entry name" value="RRNA_A_DIMETH"/>
    <property type="match status" value="1"/>
</dbReference>
<dbReference type="PROSITE" id="PS51689">
    <property type="entry name" value="SAM_RNA_A_N6_MT"/>
    <property type="match status" value="1"/>
</dbReference>
<organism>
    <name type="scientific">Bacillus cereus (strain AH820)</name>
    <dbReference type="NCBI Taxonomy" id="405535"/>
    <lineage>
        <taxon>Bacteria</taxon>
        <taxon>Bacillati</taxon>
        <taxon>Bacillota</taxon>
        <taxon>Bacilli</taxon>
        <taxon>Bacillales</taxon>
        <taxon>Bacillaceae</taxon>
        <taxon>Bacillus</taxon>
        <taxon>Bacillus cereus group</taxon>
    </lineage>
</organism>
<accession>B7JK47</accession>
<proteinExistence type="inferred from homology"/>
<sequence length="292" mass="32768">MKDIATPNRTKDIVEKYGFSFKKSLGQNFLIDTNVLNRIVDHAEIGSESGAIEIGPGIGALTEQLAKRAKKVVAFEIDQRLLPILDETLAPYGNVTVINKDVLKADVHEVFSEQFEEGQDVMVVANLPYYITTPILFKLLEEKLPVRGFVVMMQKEVGDRLAAKPGTKEYGSLSIAIQYYTEVETVMTVPRTVFVPQPNVDSAIIRLLKRPKPVVEVTDETFFFEVVRASFAQRRKTLMNNLSNNLNGFPKDKELLDRILTEVGIDPKRRGETLSIEEFATLSNALVLHKLS</sequence>